<name>TAU_PAPHA</name>
<gene>
    <name type="primary">MAPT</name>
    <name type="synonym">TAU</name>
</gene>
<feature type="initiator methionine" description="Removed" evidence="2">
    <location>
        <position position="1"/>
    </location>
</feature>
<feature type="chain" id="PRO_0000072744" description="Microtubule-associated protein tau">
    <location>
        <begin position="2"/>
        <end position="383"/>
    </location>
</feature>
<feature type="repeat" description="Tau/MAP 1" evidence="5">
    <location>
        <begin position="186"/>
        <end position="216"/>
    </location>
</feature>
<feature type="repeat" description="Tau/MAP 2" evidence="5">
    <location>
        <begin position="217"/>
        <end position="247"/>
    </location>
</feature>
<feature type="repeat" description="Tau/MAP 3" evidence="5">
    <location>
        <begin position="248"/>
        <end position="278"/>
    </location>
</feature>
<feature type="repeat" description="Tau/MAP 4" evidence="5">
    <location>
        <begin position="279"/>
        <end position="310"/>
    </location>
</feature>
<feature type="region of interest" description="Disordered" evidence="6">
    <location>
        <begin position="1"/>
        <end position="198"/>
    </location>
</feature>
<feature type="region of interest" description="Disordered" evidence="6">
    <location>
        <begin position="340"/>
        <end position="359"/>
    </location>
</feature>
<feature type="compositionally biased region" description="Basic and acidic residues" evidence="6">
    <location>
        <begin position="1"/>
        <end position="27"/>
    </location>
</feature>
<feature type="compositionally biased region" description="Basic and acidic residues" evidence="6">
    <location>
        <begin position="72"/>
        <end position="91"/>
    </location>
</feature>
<feature type="compositionally biased region" description="Pro residues" evidence="6">
    <location>
        <begin position="116"/>
        <end position="128"/>
    </location>
</feature>
<feature type="compositionally biased region" description="Low complexity" evidence="6">
    <location>
        <begin position="129"/>
        <end position="156"/>
    </location>
</feature>
<feature type="compositionally biased region" description="Polar residues" evidence="6">
    <location>
        <begin position="343"/>
        <end position="358"/>
    </location>
</feature>
<feature type="modified residue" description="N-acetylalanine" evidence="2">
    <location>
        <position position="2"/>
    </location>
</feature>
<feature type="modified residue" description="Phosphotyrosine" evidence="2">
    <location>
        <position position="18"/>
    </location>
</feature>
<feature type="modified residue" description="Phosphotyrosine" evidence="3">
    <location>
        <position position="29"/>
    </location>
</feature>
<feature type="modified residue" description="Phosphothreonine" evidence="3">
    <location>
        <position position="53"/>
    </location>
</feature>
<feature type="modified residue" description="Phosphothreonine" evidence="2">
    <location>
        <position position="95"/>
    </location>
</feature>
<feature type="modified residue" description="Omega-N-methylarginine" evidence="3">
    <location>
        <position position="97"/>
    </location>
</feature>
<feature type="modified residue" description="N6,N6-dimethyllysine; alternate" evidence="3">
    <location>
        <position position="105"/>
    </location>
</feature>
<feature type="modified residue" description="N6-acetyllysine; alternate" evidence="3">
    <location>
        <position position="105"/>
    </location>
</feature>
<feature type="modified residue" description="Phosphothreonine" evidence="3">
    <location>
        <position position="111"/>
    </location>
</feature>
<feature type="modified residue" description="Phosphothreonine" evidence="3">
    <location>
        <position position="117"/>
    </location>
</feature>
<feature type="modified residue" description="Phosphothreonine" evidence="2">
    <location>
        <position position="123"/>
    </location>
</feature>
<feature type="modified residue" description="Phosphoserine" evidence="3">
    <location>
        <position position="127"/>
    </location>
</feature>
<feature type="modified residue" description="Phosphoserine" evidence="3">
    <location>
        <position position="133"/>
    </location>
</feature>
<feature type="modified residue" description="Phosphoserine" evidence="3">
    <location>
        <position position="137"/>
    </location>
</feature>
<feature type="modified residue" description="Phosphotyrosine" evidence="2">
    <location>
        <position position="139"/>
    </location>
</feature>
<feature type="modified residue" description="Phosphoserine" evidence="2">
    <location>
        <position position="140"/>
    </location>
</feature>
<feature type="modified residue" description="Phosphoserine" evidence="2">
    <location>
        <position position="141"/>
    </location>
</feature>
<feature type="modified residue" description="Phosphoserine" evidence="2">
    <location>
        <position position="144"/>
    </location>
</feature>
<feature type="modified residue" description="Phosphothreonine" evidence="2">
    <location>
        <position position="147"/>
    </location>
</feature>
<feature type="modified residue" description="Phosphothreonine" evidence="2">
    <location>
        <position position="154"/>
    </location>
</feature>
<feature type="modified residue" description="Phosphoserine" evidence="2">
    <location>
        <position position="156"/>
    </location>
</feature>
<feature type="modified residue" description="Phosphothreonine" evidence="2">
    <location>
        <position position="159"/>
    </location>
</feature>
<feature type="modified residue" description="N6-acetyllysine" evidence="3">
    <location>
        <position position="167"/>
    </location>
</feature>
<feature type="modified residue" description="Phosphothreonine" evidence="2">
    <location>
        <position position="173"/>
    </location>
</feature>
<feature type="modified residue" description="Phosphoserine" evidence="2">
    <location>
        <position position="177"/>
    </location>
</feature>
<feature type="modified residue" description="Phosphoserine" evidence="2">
    <location>
        <position position="179"/>
    </location>
</feature>
<feature type="modified residue" description="N6-acetyllysine; alternate" evidence="3">
    <location>
        <position position="201"/>
    </location>
</feature>
<feature type="modified residue" description="N6-methyllysine; alternate" evidence="3">
    <location>
        <position position="201"/>
    </location>
</feature>
<feature type="modified residue" description="Phosphoserine" evidence="2">
    <location>
        <position position="204"/>
    </location>
</feature>
<feature type="modified residue" description="N6-acetyllysine; alternate" evidence="3">
    <location>
        <position position="223"/>
    </location>
</feature>
<feature type="modified residue" description="Phosphoserine" evidence="2">
    <location>
        <position position="227"/>
    </location>
</feature>
<feature type="modified residue" description="Phosphoserine" evidence="2">
    <location>
        <position position="231"/>
    </location>
</feature>
<feature type="modified residue" description="N6-acetyllysine" evidence="3">
    <location>
        <position position="232"/>
    </location>
</feature>
<feature type="modified residue" description="Phosphoserine" evidence="2">
    <location>
        <position position="235"/>
    </location>
</feature>
<feature type="modified residue" description="N6-acetyllysine; alternate" evidence="3">
    <location>
        <position position="240"/>
    </location>
</feature>
<feature type="modified residue" description="Phosphoserine" evidence="2">
    <location>
        <position position="247"/>
    </location>
</feature>
<feature type="modified residue" description="N6,N6-dimethyllysine; alternate" evidence="3">
    <location>
        <position position="253"/>
    </location>
</feature>
<feature type="modified residue" description="N6-acetyllysine; alternate" evidence="3">
    <location>
        <position position="253"/>
    </location>
</feature>
<feature type="modified residue" description="N6-acetyllysine; alternate" evidence="3">
    <location>
        <position position="259"/>
    </location>
</feature>
<feature type="modified residue" description="N6-acetyllysine; alternate" evidence="3">
    <location>
        <position position="263"/>
    </location>
</feature>
<feature type="modified residue" description="Phosphoserine" evidence="2">
    <location>
        <position position="266"/>
    </location>
</feature>
<feature type="modified residue" description="N6-acetyllysine; alternate" evidence="3">
    <location>
        <position position="273"/>
    </location>
</feature>
<feature type="modified residue" description="N6-acetyllysine; alternate" evidence="3">
    <location>
        <position position="285"/>
    </location>
</feature>
<feature type="modified residue" description="N6-acetyllysine; alternate" evidence="3">
    <location>
        <position position="289"/>
    </location>
</feature>
<feature type="modified residue" description="Omega-N-methylarginine" evidence="3">
    <location>
        <position position="291"/>
    </location>
</feature>
<feature type="modified residue" description="Phosphoserine" evidence="2">
    <location>
        <position position="294"/>
    </location>
</feature>
<feature type="modified residue" description="Phosphoserine" evidence="2">
    <location>
        <position position="298"/>
    </location>
</feature>
<feature type="modified residue" description="N6-acetyllysine; alternate" evidence="3">
    <location>
        <position position="311"/>
    </location>
</feature>
<feature type="modified residue" description="N6-acetyllysine; alternate" evidence="3">
    <location>
        <position position="327"/>
    </location>
</feature>
<feature type="modified residue" description="Phosphotyrosine" evidence="3">
    <location>
        <position position="336"/>
    </location>
</feature>
<feature type="modified residue" description="Phosphoserine" evidence="2">
    <location>
        <position position="338"/>
    </location>
</feature>
<feature type="modified residue" description="Phosphoserine" evidence="2">
    <location>
        <position position="342"/>
    </location>
</feature>
<feature type="modified residue" description="Phosphothreonine" evidence="3">
    <location>
        <position position="345"/>
    </location>
</feature>
<feature type="modified residue" description="Phosphoserine" evidence="2">
    <location>
        <position position="346"/>
    </location>
</feature>
<feature type="modified residue" description="Phosphoserine" evidence="2">
    <location>
        <position position="351"/>
    </location>
</feature>
<feature type="modified residue" description="Phosphoserine" evidence="2">
    <location>
        <position position="358"/>
    </location>
</feature>
<feature type="modified residue" description="Phosphoserine" evidence="2">
    <location>
        <position position="364"/>
    </location>
</feature>
<feature type="modified residue" description="Phosphothreonine" evidence="2">
    <location>
        <position position="369"/>
    </location>
</feature>
<feature type="disulfide bond" evidence="1">
    <location>
        <begin position="233"/>
        <end position="264"/>
    </location>
</feature>
<feature type="cross-link" description="Glycyl lysine isopeptide (Lys-Gly) (interchain with G-Cter in ubiquitin)" evidence="3">
    <location>
        <position position="44"/>
    </location>
</feature>
<feature type="cross-link" description="Glycyl lysine isopeptide (Lys-Gly) (interchain with G-Cter in ubiquitin)" evidence="2">
    <location>
        <position position="196"/>
    </location>
</feature>
<feature type="cross-link" description="Glycyl lysine isopeptide (Lys-Gly) (interchain with G-Cter in ubiquitin); alternate" evidence="3">
    <location>
        <position position="201"/>
    </location>
</feature>
<feature type="cross-link" description="Glycyl lysine isopeptide (Lys-Gly) (interchain with G-Cter in ubiquitin)" evidence="3">
    <location>
        <position position="209"/>
    </location>
</feature>
<feature type="cross-link" description="Glycyl lysine isopeptide (Lys-Gly) (interchain with G-Cter in ubiquitin); alternate" evidence="3">
    <location>
        <position position="223"/>
    </location>
</feature>
<feature type="cross-link" description="Glycyl lysine isopeptide (Lys-Gly) (interchain with G-Cter in ubiquitin); alternate" evidence="3">
    <location>
        <position position="240"/>
    </location>
</feature>
<feature type="cross-link" description="Glycyl lysine isopeptide (Lys-Gly) (interchain with G-Cter in ubiquitin); alternate" evidence="2">
    <location>
        <position position="253"/>
    </location>
</feature>
<feature type="cross-link" description="Glycyl lysine isopeptide (Lys-Gly) (interchain with G-Cter in ubiquitin); alternate" evidence="3">
    <location>
        <position position="259"/>
    </location>
</feature>
<feature type="cross-link" description="Glycyl lysine isopeptide (Lys-Gly) (interchain with G-Cter in ubiquitin); alternate" evidence="3">
    <location>
        <position position="263"/>
    </location>
</feature>
<feature type="cross-link" description="Glycyl lysine isopeptide (Lys-Gly) (interchain with G-Cter in ubiquitin); alternate" evidence="3">
    <location>
        <position position="273"/>
    </location>
</feature>
<feature type="cross-link" description="Glycyl lysine isopeptide (Lys-Gly) (interchain with G-Cter in ubiquitin); alternate" evidence="3">
    <location>
        <position position="285"/>
    </location>
</feature>
<feature type="cross-link" description="Glycyl lysine isopeptide (Lys-Gly) (interchain with G-Cter in ubiquitin); alternate" evidence="3">
    <location>
        <position position="289"/>
    </location>
</feature>
<feature type="cross-link" description="Glycyl lysine isopeptide (Lys-Gly) (interchain with G-Cter in ubiquitin)" evidence="2">
    <location>
        <position position="295"/>
    </location>
</feature>
<feature type="cross-link" description="Glycyl lysine isopeptide (Lys-Gly) (interchain with G-Cter in ubiquitin); alternate" evidence="3">
    <location>
        <position position="311"/>
    </location>
</feature>
<feature type="cross-link" description="Glycyl lysine isopeptide (Lys-Gly) (interchain with G-Cter in ubiquitin)" evidence="3">
    <location>
        <position position="317"/>
    </location>
</feature>
<feature type="cross-link" description="Glycyl lysine isopeptide (Lys-Gly) (interchain with G-Cter in ubiquitin); alternate" evidence="3">
    <location>
        <position position="327"/>
    </location>
</feature>
<dbReference type="EMBL" id="AF281310">
    <property type="protein sequence ID" value="AAF97596.1"/>
    <property type="molecule type" value="mRNA"/>
</dbReference>
<dbReference type="SMR" id="Q9MYX8"/>
<dbReference type="GO" id="GO:0030424">
    <property type="term" value="C:axon"/>
    <property type="evidence" value="ECO:0007669"/>
    <property type="project" value="UniProtKB-SubCell"/>
</dbReference>
<dbReference type="GO" id="GO:0005737">
    <property type="term" value="C:cytoplasm"/>
    <property type="evidence" value="ECO:0000250"/>
    <property type="project" value="UniProtKB"/>
</dbReference>
<dbReference type="GO" id="GO:0005829">
    <property type="term" value="C:cytosol"/>
    <property type="evidence" value="ECO:0007669"/>
    <property type="project" value="UniProtKB-SubCell"/>
</dbReference>
<dbReference type="GO" id="GO:0030425">
    <property type="term" value="C:dendrite"/>
    <property type="evidence" value="ECO:0000250"/>
    <property type="project" value="UniProtKB"/>
</dbReference>
<dbReference type="GO" id="GO:0005874">
    <property type="term" value="C:microtubule"/>
    <property type="evidence" value="ECO:0007669"/>
    <property type="project" value="UniProtKB-KW"/>
</dbReference>
<dbReference type="GO" id="GO:0005886">
    <property type="term" value="C:plasma membrane"/>
    <property type="evidence" value="ECO:0007669"/>
    <property type="project" value="UniProtKB-SubCell"/>
</dbReference>
<dbReference type="GO" id="GO:0008017">
    <property type="term" value="F:microtubule binding"/>
    <property type="evidence" value="ECO:0007669"/>
    <property type="project" value="InterPro"/>
</dbReference>
<dbReference type="GO" id="GO:0000226">
    <property type="term" value="P:microtubule cytoskeleton organization"/>
    <property type="evidence" value="ECO:0007669"/>
    <property type="project" value="TreeGrafter"/>
</dbReference>
<dbReference type="GO" id="GO:0031175">
    <property type="term" value="P:neuron projection development"/>
    <property type="evidence" value="ECO:0007669"/>
    <property type="project" value="TreeGrafter"/>
</dbReference>
<dbReference type="InterPro" id="IPR027324">
    <property type="entry name" value="MAP2/MAP4/Tau"/>
</dbReference>
<dbReference type="InterPro" id="IPR001084">
    <property type="entry name" value="MAP_tubulin-bd_rpt"/>
</dbReference>
<dbReference type="InterPro" id="IPR002955">
    <property type="entry name" value="Tau"/>
</dbReference>
<dbReference type="PANTHER" id="PTHR11501">
    <property type="entry name" value="MICROTUBULE-ASSOCIATED PROTEIN"/>
    <property type="match status" value="1"/>
</dbReference>
<dbReference type="PANTHER" id="PTHR11501:SF14">
    <property type="entry name" value="MICROTUBULE-ASSOCIATED PROTEIN TAU"/>
    <property type="match status" value="1"/>
</dbReference>
<dbReference type="Pfam" id="PF00418">
    <property type="entry name" value="Tubulin-binding"/>
    <property type="match status" value="4"/>
</dbReference>
<dbReference type="PRINTS" id="PR01261">
    <property type="entry name" value="TAUPROTEIN"/>
</dbReference>
<dbReference type="PROSITE" id="PS00229">
    <property type="entry name" value="TAU_MAP_1"/>
    <property type="match status" value="4"/>
</dbReference>
<dbReference type="PROSITE" id="PS51491">
    <property type="entry name" value="TAU_MAP_2"/>
    <property type="match status" value="4"/>
</dbReference>
<proteinExistence type="evidence at transcript level"/>
<protein>
    <recommendedName>
        <fullName>Microtubule-associated protein tau</fullName>
    </recommendedName>
    <alternativeName>
        <fullName>Neurofibrillary tangle protein</fullName>
    </alternativeName>
    <alternativeName>
        <fullName>Paired helical filament-tau</fullName>
        <shortName>PHF-tau</shortName>
    </alternativeName>
</protein>
<accession>Q9MYX8</accession>
<organism>
    <name type="scientific">Papio hamadryas</name>
    <name type="common">Hamadryas baboon</name>
    <dbReference type="NCBI Taxonomy" id="9557"/>
    <lineage>
        <taxon>Eukaryota</taxon>
        <taxon>Metazoa</taxon>
        <taxon>Chordata</taxon>
        <taxon>Craniata</taxon>
        <taxon>Vertebrata</taxon>
        <taxon>Euteleostomi</taxon>
        <taxon>Mammalia</taxon>
        <taxon>Eutheria</taxon>
        <taxon>Euarchontoglires</taxon>
        <taxon>Primates</taxon>
        <taxon>Haplorrhini</taxon>
        <taxon>Catarrhini</taxon>
        <taxon>Cercopithecidae</taxon>
        <taxon>Cercopithecinae</taxon>
        <taxon>Papio</taxon>
    </lineage>
</organism>
<keyword id="KW-0007">Acetylation</keyword>
<keyword id="KW-1003">Cell membrane</keyword>
<keyword id="KW-0966">Cell projection</keyword>
<keyword id="KW-0963">Cytoplasm</keyword>
<keyword id="KW-0206">Cytoskeleton</keyword>
<keyword id="KW-1015">Disulfide bond</keyword>
<keyword id="KW-1017">Isopeptide bond</keyword>
<keyword id="KW-0472">Membrane</keyword>
<keyword id="KW-0488">Methylation</keyword>
<keyword id="KW-0493">Microtubule</keyword>
<keyword id="KW-0597">Phosphoprotein</keyword>
<keyword id="KW-0677">Repeat</keyword>
<keyword id="KW-0832">Ubl conjugation</keyword>
<reference key="1">
    <citation type="submission" date="2000-06" db="EMBL/GenBank/DDBJ databases">
        <authorList>
            <person name="Wang X.L."/>
            <person name="Wang J."/>
            <person name="Schultz C."/>
            <person name="Hubbard G.B."/>
        </authorList>
    </citation>
    <scope>NUCLEOTIDE SEQUENCE [MRNA]</scope>
    <source>
        <tissue>Frontal cortex</tissue>
    </source>
</reference>
<evidence type="ECO:0000250" key="1"/>
<evidence type="ECO:0000250" key="2">
    <source>
        <dbReference type="UniProtKB" id="P10636"/>
    </source>
</evidence>
<evidence type="ECO:0000250" key="3">
    <source>
        <dbReference type="UniProtKB" id="P10637"/>
    </source>
</evidence>
<evidence type="ECO:0000250" key="4">
    <source>
        <dbReference type="UniProtKB" id="P19332"/>
    </source>
</evidence>
<evidence type="ECO:0000255" key="5">
    <source>
        <dbReference type="PROSITE-ProRule" id="PRU00824"/>
    </source>
</evidence>
<evidence type="ECO:0000256" key="6">
    <source>
        <dbReference type="SAM" id="MobiDB-lite"/>
    </source>
</evidence>
<comment type="function">
    <text evidence="1">Promotes microtubule assembly and stability, and might be involved in the establishment and maintenance of neuronal polarity. The C-terminus binds axonal microtubules while the N-terminus binds neural plasma membrane components, suggesting that tau functions as a linker protein between both. Axonal polarity is predetermined by tau localization (in the neuronal cell) in the domain of the cell body defined by the centrosome (By similarity).</text>
</comment>
<comment type="subunit">
    <text evidence="2 3 4">Interacts with MARK1, MARK2, MARK3 and MARK4 (By similarity). Interacts with SQSTM1 when polyubiquitinated (By similarity). Interacts with PSMC2 through SQSTM1 (By similarity). Interacts with FKBP4 (By similarity). Binds to CSNK1D (By similarity). Interacts with SGK1 (By similarity). Interacts with PIN1 (By similarity). Interacts with LRRK2 (By similarity). Interacts with LRP1, leading to endocytosis; this interaction is reduced in the presence of LRPAP1/RAP (By similarity).</text>
</comment>
<comment type="subcellular location">
    <subcellularLocation>
        <location evidence="2">Cytoplasm</location>
        <location evidence="2">Cytosol</location>
    </subcellularLocation>
    <subcellularLocation>
        <location evidence="2">Cell membrane</location>
        <topology evidence="2">Peripheral membrane protein</topology>
        <orientation evidence="2">Cytoplasmic side</orientation>
    </subcellularLocation>
    <subcellularLocation>
        <location evidence="2">Cytoplasm</location>
        <location evidence="2">Cytoskeleton</location>
    </subcellularLocation>
    <subcellularLocation>
        <location evidence="2">Cell projection</location>
        <location evidence="2">Axon</location>
    </subcellularLocation>
    <subcellularLocation>
        <location evidence="2">Cell projection</location>
        <location evidence="2">Dendrite</location>
    </subcellularLocation>
    <text evidence="2">Mostly found in the axons of neurons, in the cytosol and in association with plasma membrane components.</text>
</comment>
<comment type="tissue specificity">
    <text>Expressed in neurons.</text>
</comment>
<comment type="domain">
    <text>The tau/MAP repeat binds to tubulin.</text>
</comment>
<comment type="PTM">
    <text evidence="1">Polyubiquitinated. Requires functional TRAF6 and may provoke SQSTM1-dependent degradation by the proteasome (By similarity).</text>
</comment>
<comment type="PTM">
    <text evidence="1 2">Phosphorylation at various serine and threonine residues in S-P or T-P motifs by proline-directed protein kinases (PDPK1, CDK1, CDK5, GSK3, MAPK) (a few sites per protein in interphase, more in mitosis), and at serine residues in K-X-G-S motifs by MAP/microtubule affinity-regulating kinase (MARK1, MARK2, MARK3 or MARK4), causing detachment from microtubules, and their disassembly (By similarity). Phosphorylation at Ser-204 by BRSK1 and BRSK2 in neurons affects ability to bind microtubules and plays a role in neuron polarization. Phosphorylated by PHK. Dephosphorylation at several serine and threonine residues by the serine/threonine phosphatase PPP5C (By similarity).</text>
</comment>
<sequence>MAEPRQEFDVMEDHAGTYGLGDRKDQEGYTMLQDQEGDTDAGLKAEEAGIGDTPSLEDEAAGHVTQARMVSKSKDGTGSDDKKAKGADGKTKIATPRGAAPPGQKGQANATRIPAKTPPAPKTPPSSGEPPKSGDRSGYSSPGSPGTPGSRSRTPSLPTPPAREPKKVAVVRTPPKSPSSAKSRLQTAPVPMPDLKNVKSKIGSTENLKHQPGGGKVQIINKKLDLSNVQSKCGSKDNIKHVPGGGSVQIVYKPVDLSKVTSKCGSLGNIHHKPGGGQVEVKSEKLDFKDRVQSKIGSLDNITHVPGGGNKKIETHKLTFRENAKAKTDHGAEIVYKSPVVSGDTSPRHLSNVSSTGSIDMVDSPQLATLADEVSASLAKQGL</sequence>